<sequence length="83" mass="8891">MKIMQVEKTLVSTNRIADMGHKPLLVVWEKPGAPRQVAVDAIGCIPGDWVLCVGSSAAREAAGSKSYPSDLTIIGIIDQWNGE</sequence>
<gene>
    <name evidence="7" type="primary">csoS4A</name>
    <name evidence="8" type="synonym">orfA</name>
    <name type="ordered locus">Hneap_0918</name>
</gene>
<keyword id="KW-0002">3D-structure</keyword>
<keyword id="KW-1283">Bacterial microcompartment</keyword>
<keyword id="KW-0120">Carbon dioxide fixation</keyword>
<keyword id="KW-1282">Carboxysome</keyword>
<keyword id="KW-1185">Reference proteome</keyword>
<feature type="chain" id="PRO_0000452079" description="Carboxysome shell vertex protein CsoS4A">
    <location>
        <begin position="1"/>
        <end position="83"/>
    </location>
</feature>
<feature type="domain" description="BMV" evidence="1">
    <location>
        <begin position="1"/>
        <end position="78"/>
    </location>
</feature>
<feature type="strand" evidence="14">
    <location>
        <begin position="2"/>
        <end position="10"/>
    </location>
</feature>
<feature type="strand" evidence="13">
    <location>
        <begin position="12"/>
        <end position="15"/>
    </location>
</feature>
<feature type="helix" evidence="14">
    <location>
        <begin position="17"/>
        <end position="19"/>
    </location>
</feature>
<feature type="strand" evidence="14">
    <location>
        <begin position="24"/>
        <end position="30"/>
    </location>
</feature>
<feature type="strand" evidence="14">
    <location>
        <begin position="36"/>
        <end position="42"/>
    </location>
</feature>
<feature type="strand" evidence="14">
    <location>
        <begin position="49"/>
        <end position="54"/>
    </location>
</feature>
<feature type="helix" evidence="14">
    <location>
        <begin position="57"/>
        <end position="61"/>
    </location>
</feature>
<feature type="strand" evidence="14">
    <location>
        <begin position="70"/>
        <end position="76"/>
    </location>
</feature>
<evidence type="ECO:0000255" key="1">
    <source>
        <dbReference type="PROSITE-ProRule" id="PRU01280"/>
    </source>
</evidence>
<evidence type="ECO:0000269" key="2">
    <source>
    </source>
</evidence>
<evidence type="ECO:0000269" key="3">
    <source>
    </source>
</evidence>
<evidence type="ECO:0000269" key="4">
    <source>
    </source>
</evidence>
<evidence type="ECO:0000269" key="5">
    <source>
    </source>
</evidence>
<evidence type="ECO:0000269" key="6">
    <source>
    </source>
</evidence>
<evidence type="ECO:0000303" key="7">
    <source>
    </source>
</evidence>
<evidence type="ECO:0000303" key="8">
    <source>
    </source>
</evidence>
<evidence type="ECO:0000305" key="9"/>
<evidence type="ECO:0000305" key="10">
    <source>
    </source>
</evidence>
<evidence type="ECO:0000305" key="11">
    <source>
    </source>
</evidence>
<evidence type="ECO:0007744" key="12">
    <source>
        <dbReference type="PDB" id="2RCF"/>
    </source>
</evidence>
<evidence type="ECO:0007829" key="13">
    <source>
        <dbReference type="PDB" id="2RCF"/>
    </source>
</evidence>
<evidence type="ECO:0007829" key="14">
    <source>
        <dbReference type="PDB" id="8B12"/>
    </source>
</evidence>
<accession>O85043</accession>
<accession>D0KZ88</accession>
<proteinExistence type="evidence at protein level"/>
<organism>
    <name type="scientific">Halothiobacillus neapolitanus (strain ATCC 23641 / c2)</name>
    <name type="common">Thiobacillus neapolitanus</name>
    <dbReference type="NCBI Taxonomy" id="555778"/>
    <lineage>
        <taxon>Bacteria</taxon>
        <taxon>Pseudomonadati</taxon>
        <taxon>Pseudomonadota</taxon>
        <taxon>Gammaproteobacteria</taxon>
        <taxon>Chromatiales</taxon>
        <taxon>Halothiobacillaceae</taxon>
        <taxon>Halothiobacillus</taxon>
    </lineage>
</organism>
<dbReference type="EMBL" id="AF038430">
    <property type="protein sequence ID" value="AAC32553.1"/>
    <property type="molecule type" value="Genomic_DNA"/>
</dbReference>
<dbReference type="EMBL" id="CP001801">
    <property type="protein sequence ID" value="ACX95761.1"/>
    <property type="molecule type" value="Genomic_DNA"/>
</dbReference>
<dbReference type="RefSeq" id="WP_012823797.1">
    <property type="nucleotide sequence ID" value="NC_013422.1"/>
</dbReference>
<dbReference type="PDB" id="2RCF">
    <property type="method" value="X-ray"/>
    <property type="resolution" value="2.15 A"/>
    <property type="chains" value="A/B/C/D/E=1-83"/>
</dbReference>
<dbReference type="PDB" id="7CKB">
    <property type="method" value="EM"/>
    <property type="resolution" value="3.24 A"/>
    <property type="chains" value="A0/A1/A2/A3/A4/A5/A6/A7/A8/A9/AA/AB/AC/AD/AE/AF/AG/AH/AI/AJ/AK/AL/AM/AN/AO/AP/AQ/AR/AS/AT=1-83"/>
</dbReference>
<dbReference type="PDB" id="7CKC">
    <property type="method" value="EM"/>
    <property type="resolution" value="2.90 A"/>
    <property type="chains" value="A0/A1/A2/A3/A4/A5/A6/A7/A8/A9/AA/AB/AC/AD/AE/AF/AG/AH/AI/AJ/AK/AL/AM/AN/AO/AP/AQ/AR/AS/AT=1-83"/>
</dbReference>
<dbReference type="PDB" id="8B0Y">
    <property type="method" value="EM"/>
    <property type="resolution" value="2.79 A"/>
    <property type="chains" value="A=1-83"/>
</dbReference>
<dbReference type="PDB" id="8B11">
    <property type="method" value="EM"/>
    <property type="resolution" value="2.52 A"/>
    <property type="chains" value="A=1-83"/>
</dbReference>
<dbReference type="PDB" id="8B12">
    <property type="method" value="EM"/>
    <property type="resolution" value="1.86 A"/>
    <property type="chains" value="G=1-83"/>
</dbReference>
<dbReference type="PDB" id="8YVC">
    <property type="method" value="EM"/>
    <property type="resolution" value="3.04 A"/>
    <property type="chains" value="U=1-83"/>
</dbReference>
<dbReference type="PDB" id="8YVD">
    <property type="method" value="EM"/>
    <property type="resolution" value="2.75 A"/>
    <property type="chains" value="P=1-83"/>
</dbReference>
<dbReference type="PDB" id="8YVE">
    <property type="method" value="EM"/>
    <property type="resolution" value="2.30 A"/>
    <property type="chains" value="v=1-83"/>
</dbReference>
<dbReference type="PDB" id="8YVF">
    <property type="method" value="EM"/>
    <property type="resolution" value="2.99 A"/>
    <property type="chains" value="1/4/w/x/y/z=1-83"/>
</dbReference>
<dbReference type="PDB" id="8YVI">
    <property type="method" value="EM"/>
    <property type="resolution" value="2.93 A"/>
    <property type="chains" value="H=1-83"/>
</dbReference>
<dbReference type="PDB" id="9F0H">
    <property type="method" value="EM"/>
    <property type="resolution" value="1.80 A"/>
    <property type="chains" value="4=1-83"/>
</dbReference>
<dbReference type="PDBsum" id="2RCF"/>
<dbReference type="PDBsum" id="7CKB"/>
<dbReference type="PDBsum" id="7CKC"/>
<dbReference type="PDBsum" id="8B0Y"/>
<dbReference type="PDBsum" id="8B11"/>
<dbReference type="PDBsum" id="8B12"/>
<dbReference type="PDBsum" id="8YVC"/>
<dbReference type="PDBsum" id="8YVD"/>
<dbReference type="PDBsum" id="8YVE"/>
<dbReference type="PDBsum" id="8YVF"/>
<dbReference type="PDBsum" id="8YVI"/>
<dbReference type="PDBsum" id="9F0H"/>
<dbReference type="EMDB" id="EMD-15798"/>
<dbReference type="EMDB" id="EMD-15799"/>
<dbReference type="EMDB" id="EMD-15801"/>
<dbReference type="EMDB" id="EMD-30384"/>
<dbReference type="EMDB" id="EMD-30385"/>
<dbReference type="EMDB" id="EMD-39596"/>
<dbReference type="EMDB" id="EMD-39597"/>
<dbReference type="EMDB" id="EMD-39598"/>
<dbReference type="EMDB" id="EMD-39599"/>
<dbReference type="EMDB" id="EMD-39601"/>
<dbReference type="EMDB" id="EMD-50109"/>
<dbReference type="SMR" id="O85043"/>
<dbReference type="STRING" id="555778.Hneap_0918"/>
<dbReference type="KEGG" id="hna:Hneap_0918"/>
<dbReference type="eggNOG" id="COG4576">
    <property type="taxonomic scope" value="Bacteria"/>
</dbReference>
<dbReference type="HOGENOM" id="CLU_148498_1_0_6"/>
<dbReference type="OrthoDB" id="540628at2"/>
<dbReference type="EvolutionaryTrace" id="O85043"/>
<dbReference type="Proteomes" id="UP000009102">
    <property type="component" value="Chromosome"/>
</dbReference>
<dbReference type="GO" id="GO:0031470">
    <property type="term" value="C:carboxysome"/>
    <property type="evidence" value="ECO:0007669"/>
    <property type="project" value="UniProtKB-SubCell"/>
</dbReference>
<dbReference type="GO" id="GO:0015977">
    <property type="term" value="P:carbon fixation"/>
    <property type="evidence" value="ECO:0007669"/>
    <property type="project" value="UniProtKB-KW"/>
</dbReference>
<dbReference type="CDD" id="cd01614">
    <property type="entry name" value="EutN_CcmL"/>
    <property type="match status" value="1"/>
</dbReference>
<dbReference type="Gene3D" id="2.40.50.220">
    <property type="entry name" value="EutN/Ccml"/>
    <property type="match status" value="1"/>
</dbReference>
<dbReference type="InterPro" id="IPR014076">
    <property type="entry name" value="CsoS4A"/>
</dbReference>
<dbReference type="InterPro" id="IPR004992">
    <property type="entry name" value="EutN_CcmL"/>
</dbReference>
<dbReference type="InterPro" id="IPR036677">
    <property type="entry name" value="EutN_CcmL_sf"/>
</dbReference>
<dbReference type="NCBIfam" id="TIGR02703">
    <property type="entry name" value="carboxysome_A"/>
    <property type="match status" value="1"/>
</dbReference>
<dbReference type="PANTHER" id="PTHR36539:SF1">
    <property type="entry name" value="BACTERIAL MICROCOMPARTMENT SHELL VERTEX PROTEIN EUTN"/>
    <property type="match status" value="1"/>
</dbReference>
<dbReference type="PANTHER" id="PTHR36539">
    <property type="entry name" value="ETHANOLAMINE UTILIZATION PROTEIN EUTN"/>
    <property type="match status" value="1"/>
</dbReference>
<dbReference type="Pfam" id="PF03319">
    <property type="entry name" value="EutN_CcmL"/>
    <property type="match status" value="1"/>
</dbReference>
<dbReference type="SUPFAM" id="SSF159133">
    <property type="entry name" value="EutN/CcmL-like"/>
    <property type="match status" value="1"/>
</dbReference>
<dbReference type="PROSITE" id="PS51932">
    <property type="entry name" value="BMV"/>
    <property type="match status" value="1"/>
</dbReference>
<name>CSS4A_HALNC</name>
<comment type="function">
    <text evidence="3 10">Probably forms vertices in the carboxysome, a polyhedral inclusion where RuBisCO (ribulose bisphosphate carboxylase, cbbL-cbbS) is sequestered. Has been modeled to induce curvature upon insertion into an otherwise flat hexagonal layer of major carboxysome subunits (Probable). A minor shell protein, only 12 pentamers of CsoS4A/CsoS4B are calculated to be present in each carboxysome. The 2 CsoS4 proteins contribute to the impermeability of the carboxysome to CO(2) (PubMed:19844578).</text>
</comment>
<comment type="function">
    <text evidence="6">Unlike beta-carboxysomes, alpha-carboxysomes (Cb) can form without cargo protein. CsoS2 is essential for Cb formation and is also capable of targeting foreign proteins to the Cb. The Cb shell assembles with the aid of CsoS2; CsoS1A, CsoS1B and CsoS1C form the majority of the shell while CsoS4A and CsoS4B form vertices. CsoS1D forms pseudohexamers that probably control metabolite flux into and out of the shell.</text>
</comment>
<comment type="subunit">
    <text evidence="2">Homopentamer.</text>
</comment>
<comment type="subcellular location">
    <subcellularLocation>
        <location evidence="3 10">Carboxysome</location>
    </subcellularLocation>
    <text evidence="3 10">Probably forms vertices in the polyhedral carboxysome (Probable). This bacterium makes alpha-type carboxysomes (PubMed:19844578).</text>
</comment>
<comment type="domain">
    <text evidence="2 11">The tight homopentamer forms a pore with an opening of about 3.5 Angstroms in diameter which is positively charged (PubMed:18292340). A short loop (residues 30-33) protrudes above the center of the concave face to different degrees (Probable).</text>
</comment>
<comment type="disruption phenotype">
    <text evidence="3 5">A double csoS4a-csoS4B disruption does not grow in ambient air, has a wild-type growth rate in 5% CO(2), called a high-CO(2) requiring phenotype, hcr. It does not grow to the same cell density as wild-type. 1/3 fewer carboxysomes are seen per cell, about 13% of which are elongated. The carboxysome shell is more permeable than usual to inorganic carbon. Required for growth in ambient air (PubMed:31406332).</text>
</comment>
<comment type="biotechnology">
    <text evidence="4 6">Expression of 10 genes for alpha-carboxysome (Cb) proteins (cbbL-cbbS-csoS2-csoS3-csoS4A-csoS4B-csoS1C-csoS1A-csoS1B-csoS1D) in E.coli generates compartments that resemble Cb, contain RuBisCO and have its catalytic activity, showing it is possible to make artificial, functional Cb using these 10 genes. Cargo proteins can be targeted to these organelles (PubMed:22184212). Artificial Cb assembly in E.coli requires csoS2-csoS4A-csoS4B-csoS1C-csoS1A-csoS1B-csoS1D (but not the gene for carbonic anhydrase, csoS3). Targeting proteins to the organelle requires at least one of the CsoS2 C-repeats; 3 repeats gives the best localization. A nanoreactor of the Cb shell proteins has been engineered which generates H(2) using a ferredoxin-hydrogenase fusion (AC P07839-Q9FYU1) and a flavodoxin/ferredoxin--NADP reductase (AC A0A0K3QZA5) targeted separately to the Cb; the hydrogenase has first to be matured and activated by HydGXEF (AC Q8EAH9, Q8EAH8, Q8EAH7 and Q8EAH6 respectively). Encapsulation increases H(2) production about 20% during anaerobic growth, and over 4-fold more during aerobic growth (PubMed:33116131).</text>
</comment>
<comment type="similarity">
    <text evidence="9">Belongs to the CcmL/EutN family. CsoS4 subfamily.</text>
</comment>
<protein>
    <recommendedName>
        <fullName>Carboxysome shell vertex protein CsoS4A</fullName>
    </recommendedName>
</protein>
<reference key="1">
    <citation type="journal article" date="1998" name="J. Bacteriol.">
        <title>Insertion mutation of the form I cbbL gene encoding ribulose bisphosphate carboxylase/oxygenase (RuBisCO) in Thiobacillus neapolitanus results in expression of form II RuBisCO, loss of carboxysomes, and an increased CO2 requirement for growth.</title>
        <authorList>
            <person name="Baker S.H."/>
            <person name="Jin S."/>
            <person name="Aldrich H.C."/>
            <person name="Howard G.T."/>
            <person name="Shively J.M."/>
        </authorList>
    </citation>
    <scope>NUCLEOTIDE SEQUENCE [GENOMIC DNA]</scope>
    <source>
        <strain>ATCC 23641 / c2</strain>
    </source>
</reference>
<reference key="2">
    <citation type="submission" date="2009-10" db="EMBL/GenBank/DDBJ databases">
        <title>Complete sequence of Halothiobacillus neapolitanus c2.</title>
        <authorList>
            <consortium name="US DOE Joint Genome Institute"/>
            <person name="Lucas S."/>
            <person name="Copeland A."/>
            <person name="Lapidus A."/>
            <person name="Glavina del Rio T."/>
            <person name="Tice H."/>
            <person name="Bruce D."/>
            <person name="Goodwin L."/>
            <person name="Pitluck S."/>
            <person name="Davenport K."/>
            <person name="Brettin T."/>
            <person name="Detter J.C."/>
            <person name="Han C."/>
            <person name="Tapia R."/>
            <person name="Larimer F."/>
            <person name="Land M."/>
            <person name="Hauser L."/>
            <person name="Kyrpides N."/>
            <person name="Mikhailova N."/>
            <person name="Kerfeld C."/>
            <person name="Cannon G."/>
            <person name="Heinhort S."/>
        </authorList>
    </citation>
    <scope>NUCLEOTIDE SEQUENCE [LARGE SCALE GENOMIC DNA]</scope>
    <source>
        <strain>ATCC 23641 / c2</strain>
    </source>
</reference>
<reference key="3">
    <citation type="journal article" date="2009" name="PLoS ONE">
        <title>The pentameric vertex proteins are necessary for the icosahedral carboxysome shell to function as a CO2 leakage barrier.</title>
        <authorList>
            <person name="Cai F."/>
            <person name="Menon B.B."/>
            <person name="Cannon G.C."/>
            <person name="Curry K.J."/>
            <person name="Shively J.M."/>
            <person name="Heinhorst S."/>
        </authorList>
    </citation>
    <scope>FUNCTION</scope>
    <scope>SUBCELLULAR LOCATION</scope>
    <scope>DISRUPTION PHENOTYPE</scope>
    <source>
        <strain>ATCC 23641 / c2</strain>
    </source>
</reference>
<reference key="4">
    <citation type="journal article" date="2012" name="Proc. Natl. Acad. Sci. U.S.A.">
        <title>Modularity of a carbon-fixing protein organelle.</title>
        <authorList>
            <person name="Bonacci W."/>
            <person name="Teng P.K."/>
            <person name="Afonso B."/>
            <person name="Niederholtmeyer H."/>
            <person name="Grob P."/>
            <person name="Silver P.A."/>
            <person name="Savage D.F."/>
        </authorList>
    </citation>
    <scope>BIOTECHNOLOGY</scope>
    <source>
        <strain>ATCC 23641 / c2</strain>
    </source>
</reference>
<reference key="5">
    <citation type="journal article" date="2019" name="Biochem. Biophys. Res. Commun.">
        <title>Crystal structure of pentameric shell protein CsoS4B of Halothiobacillus neapolitanus alpha-carboxysome.</title>
        <authorList>
            <person name="Zhao Y.Y."/>
            <person name="Jiang Y.L."/>
            <person name="Chen Y."/>
            <person name="Zhou C.Z."/>
            <person name="Li Q."/>
        </authorList>
    </citation>
    <scope>DISCUSSION OF SEQUENCE</scope>
    <scope>DOMAIN</scope>
</reference>
<reference key="6">
    <citation type="journal article" date="2019" name="Nat. Microbiol.">
        <title>DABs are inorganic carbon pumps found throughout prokaryotic phyla.</title>
        <authorList>
            <person name="Desmarais J.J."/>
            <person name="Flamholz A.I."/>
            <person name="Blikstad C."/>
            <person name="Dugan E.J."/>
            <person name="Laughlin T.G."/>
            <person name="Oltrogge L.M."/>
            <person name="Chen A.W."/>
            <person name="Wetmore K."/>
            <person name="Diamond S."/>
            <person name="Wang J.Y."/>
            <person name="Savage D.F."/>
        </authorList>
    </citation>
    <scope>DISRUPTION PHENOTYPE</scope>
    <source>
        <strain>ATCC 23641 / c2</strain>
    </source>
</reference>
<reference key="7">
    <citation type="journal article" date="2020" name="Nat. Commun.">
        <title>Reprogramming bacterial protein organelles as a nanoreactor for hydrogen production.</title>
        <authorList>
            <person name="Li T."/>
            <person name="Jiang Q."/>
            <person name="Huang J."/>
            <person name="Aitchison C.M."/>
            <person name="Huang F."/>
            <person name="Yang M."/>
            <person name="Dykes G.F."/>
            <person name="He H.L."/>
            <person name="Wang Q."/>
            <person name="Sprick R.S."/>
            <person name="Cooper A.I."/>
            <person name="Liu L.N."/>
        </authorList>
    </citation>
    <scope>CARBOXYSOME ASSEMBLY</scope>
    <scope>BIOTECHNOLOGY</scope>
</reference>
<reference evidence="12" key="8">
    <citation type="journal article" date="2008" name="Science">
        <title>Atomic-level models of the bacterial carboxysome shell.</title>
        <authorList>
            <person name="Tanaka S."/>
            <person name="Kerfeld C.A."/>
            <person name="Sawaya M.R."/>
            <person name="Cai F."/>
            <person name="Heinhorst S."/>
            <person name="Cannon G.C."/>
            <person name="Yeates T.O."/>
        </authorList>
    </citation>
    <scope>X-RAY CRYSTALLOGRAPHY (2.15 ANGSTROMS)</scope>
    <scope>FUNCTION</scope>
    <scope>SUBUNIT</scope>
    <scope>SUBCELLULAR LOCATION</scope>
    <scope>DOMAIN</scope>
</reference>